<dbReference type="EC" id="2.3.2.27" evidence="2"/>
<dbReference type="EMBL" id="AB015425">
    <property type="protein sequence ID" value="BAB18942.1"/>
    <property type="molecule type" value="mRNA"/>
</dbReference>
<dbReference type="EMBL" id="BC099687">
    <property type="protein sequence ID" value="AAH99687.1"/>
    <property type="molecule type" value="mRNA"/>
</dbReference>
<dbReference type="EMBL" id="BC138304">
    <property type="protein sequence ID" value="AAI38305.1"/>
    <property type="molecule type" value="mRNA"/>
</dbReference>
<dbReference type="EMBL" id="BC157899">
    <property type="protein sequence ID" value="AAI57900.1"/>
    <property type="molecule type" value="mRNA"/>
</dbReference>
<dbReference type="CCDS" id="CCDS36078.1"/>
<dbReference type="RefSeq" id="NP_109639.1">
    <property type="nucleotide sequence ID" value="NM_030714.2"/>
</dbReference>
<dbReference type="RefSeq" id="XP_030101262.1">
    <property type="nucleotide sequence ID" value="XM_030245402.2"/>
</dbReference>
<dbReference type="RefSeq" id="XP_030101263.1">
    <property type="nucleotide sequence ID" value="XM_030245403.2"/>
</dbReference>
<dbReference type="RefSeq" id="XP_030101264.1">
    <property type="nucleotide sequence ID" value="XM_030245404.2"/>
</dbReference>
<dbReference type="RefSeq" id="XP_030101265.1">
    <property type="nucleotide sequence ID" value="XM_030245405.1"/>
</dbReference>
<dbReference type="RefSeq" id="XP_036012013.1">
    <property type="nucleotide sequence ID" value="XM_036156120.1"/>
</dbReference>
<dbReference type="RefSeq" id="XP_036012014.1">
    <property type="nucleotide sequence ID" value="XM_036156121.1"/>
</dbReference>
<dbReference type="RefSeq" id="XP_036012015.1">
    <property type="nucleotide sequence ID" value="XM_036156122.1"/>
</dbReference>
<dbReference type="RefSeq" id="XP_036012016.1">
    <property type="nucleotide sequence ID" value="XM_036156123.1"/>
</dbReference>
<dbReference type="SMR" id="Q80V91"/>
<dbReference type="FunCoup" id="Q80V91">
    <property type="interactions" value="591"/>
</dbReference>
<dbReference type="STRING" id="10090.ENSMUSP00000044627"/>
<dbReference type="iPTMnet" id="Q80V91"/>
<dbReference type="PhosphoSitePlus" id="Q80V91"/>
<dbReference type="SwissPalm" id="Q80V91"/>
<dbReference type="PaxDb" id="10090-ENSMUSP00000044627"/>
<dbReference type="ProteomicsDB" id="279487"/>
<dbReference type="Pumba" id="Q80V91"/>
<dbReference type="Antibodypedia" id="28813">
    <property type="antibodies" value="154 antibodies from 28 providers"/>
</dbReference>
<dbReference type="DNASU" id="80904"/>
<dbReference type="Ensembl" id="ENSMUST00000038217.14">
    <property type="protein sequence ID" value="ENSMUSP00000044627.8"/>
    <property type="gene ID" value="ENSMUSG00000040415.16"/>
</dbReference>
<dbReference type="GeneID" id="80904"/>
<dbReference type="KEGG" id="mmu:80904"/>
<dbReference type="UCSC" id="uc007hil.1">
    <property type="organism name" value="mouse"/>
</dbReference>
<dbReference type="AGR" id="MGI:2135752"/>
<dbReference type="CTD" id="196403"/>
<dbReference type="MGI" id="MGI:2135752">
    <property type="gene designation" value="Dtx3"/>
</dbReference>
<dbReference type="VEuPathDB" id="HostDB:ENSMUSG00000040415"/>
<dbReference type="eggNOG" id="ENOG502QUYA">
    <property type="taxonomic scope" value="Eukaryota"/>
</dbReference>
<dbReference type="GeneTree" id="ENSGT00940000161404"/>
<dbReference type="HOGENOM" id="CLU_030422_1_0_1"/>
<dbReference type="InParanoid" id="Q80V91"/>
<dbReference type="OMA" id="XAEHPNP"/>
<dbReference type="OrthoDB" id="527344at2759"/>
<dbReference type="TreeFam" id="TF325526"/>
<dbReference type="UniPathway" id="UPA00143"/>
<dbReference type="BioGRID-ORCS" id="80904">
    <property type="hits" value="2 hits in 79 CRISPR screens"/>
</dbReference>
<dbReference type="ChiTaRS" id="Dtx3">
    <property type="organism name" value="mouse"/>
</dbReference>
<dbReference type="PRO" id="PR:Q80V91"/>
<dbReference type="Proteomes" id="UP000000589">
    <property type="component" value="Chromosome 10"/>
</dbReference>
<dbReference type="RNAct" id="Q80V91">
    <property type="molecule type" value="protein"/>
</dbReference>
<dbReference type="Bgee" id="ENSMUSG00000040415">
    <property type="expression patterns" value="Expressed in retinal neural layer and 237 other cell types or tissues"/>
</dbReference>
<dbReference type="ExpressionAtlas" id="Q80V91">
    <property type="expression patterns" value="baseline and differential"/>
</dbReference>
<dbReference type="GO" id="GO:0005737">
    <property type="term" value="C:cytoplasm"/>
    <property type="evidence" value="ECO:0007669"/>
    <property type="project" value="UniProtKB-SubCell"/>
</dbReference>
<dbReference type="GO" id="GO:0016740">
    <property type="term" value="F:transferase activity"/>
    <property type="evidence" value="ECO:0007669"/>
    <property type="project" value="UniProtKB-KW"/>
</dbReference>
<dbReference type="GO" id="GO:0008270">
    <property type="term" value="F:zinc ion binding"/>
    <property type="evidence" value="ECO:0007669"/>
    <property type="project" value="UniProtKB-KW"/>
</dbReference>
<dbReference type="GO" id="GO:0007219">
    <property type="term" value="P:Notch signaling pathway"/>
    <property type="evidence" value="ECO:0000314"/>
    <property type="project" value="MGI"/>
</dbReference>
<dbReference type="GO" id="GO:0016567">
    <property type="term" value="P:protein ubiquitination"/>
    <property type="evidence" value="ECO:0007669"/>
    <property type="project" value="UniProtKB-UniPathway"/>
</dbReference>
<dbReference type="CDD" id="cd09633">
    <property type="entry name" value="Deltex_C"/>
    <property type="match status" value="1"/>
</dbReference>
<dbReference type="CDD" id="cd16711">
    <property type="entry name" value="RING-HC_DTX3"/>
    <property type="match status" value="1"/>
</dbReference>
<dbReference type="FunFam" id="3.30.390.130:FF:000001">
    <property type="entry name" value="Probable E3 ubiquitin-protein ligase DTX3"/>
    <property type="match status" value="1"/>
</dbReference>
<dbReference type="Gene3D" id="3.30.390.130">
    <property type="match status" value="1"/>
</dbReference>
<dbReference type="Gene3D" id="3.30.40.10">
    <property type="entry name" value="Zinc/RING finger domain, C3HC4 (zinc finger)"/>
    <property type="match status" value="1"/>
</dbReference>
<dbReference type="InterPro" id="IPR039396">
    <property type="entry name" value="Deltex_C"/>
</dbReference>
<dbReference type="InterPro" id="IPR039399">
    <property type="entry name" value="Deltex_C_sf"/>
</dbReference>
<dbReference type="InterPro" id="IPR039398">
    <property type="entry name" value="Deltex_fam"/>
</dbReference>
<dbReference type="InterPro" id="IPR001841">
    <property type="entry name" value="Znf_RING"/>
</dbReference>
<dbReference type="InterPro" id="IPR013083">
    <property type="entry name" value="Znf_RING/FYVE/PHD"/>
</dbReference>
<dbReference type="InterPro" id="IPR017907">
    <property type="entry name" value="Znf_RING_CS"/>
</dbReference>
<dbReference type="PANTHER" id="PTHR12622">
    <property type="entry name" value="DELTEX-RELATED"/>
    <property type="match status" value="1"/>
</dbReference>
<dbReference type="Pfam" id="PF18102">
    <property type="entry name" value="DTC"/>
    <property type="match status" value="1"/>
</dbReference>
<dbReference type="Pfam" id="PF13923">
    <property type="entry name" value="zf-C3HC4_2"/>
    <property type="match status" value="1"/>
</dbReference>
<dbReference type="SMART" id="SM00184">
    <property type="entry name" value="RING"/>
    <property type="match status" value="1"/>
</dbReference>
<dbReference type="SUPFAM" id="SSF57850">
    <property type="entry name" value="RING/U-box"/>
    <property type="match status" value="1"/>
</dbReference>
<dbReference type="PROSITE" id="PS00518">
    <property type="entry name" value="ZF_RING_1"/>
    <property type="match status" value="1"/>
</dbReference>
<dbReference type="PROSITE" id="PS50089">
    <property type="entry name" value="ZF_RING_2"/>
    <property type="match status" value="1"/>
</dbReference>
<organism>
    <name type="scientific">Mus musculus</name>
    <name type="common">Mouse</name>
    <dbReference type="NCBI Taxonomy" id="10090"/>
    <lineage>
        <taxon>Eukaryota</taxon>
        <taxon>Metazoa</taxon>
        <taxon>Chordata</taxon>
        <taxon>Craniata</taxon>
        <taxon>Vertebrata</taxon>
        <taxon>Euteleostomi</taxon>
        <taxon>Mammalia</taxon>
        <taxon>Eutheria</taxon>
        <taxon>Euarchontoglires</taxon>
        <taxon>Glires</taxon>
        <taxon>Rodentia</taxon>
        <taxon>Myomorpha</taxon>
        <taxon>Muroidea</taxon>
        <taxon>Muridae</taxon>
        <taxon>Murinae</taxon>
        <taxon>Mus</taxon>
        <taxon>Mus</taxon>
    </lineage>
</organism>
<reference key="1">
    <citation type="journal article" date="2001" name="Int. J. Dev. Neurosci.">
        <title>Murine homologs of deltex define a novel gene family involved in vertebrate Notch signaling and neurogenesis.</title>
        <authorList>
            <person name="Kishi N."/>
            <person name="Tang Z."/>
            <person name="Maeda Y."/>
            <person name="Hirai A."/>
            <person name="Mo R."/>
            <person name="Ito M."/>
            <person name="Suzuki S."/>
            <person name="Nakao K."/>
            <person name="Kinoshita T."/>
            <person name="Kadesch T."/>
            <person name="Hui C.-C."/>
            <person name="Artavanis-Tsakonas S."/>
            <person name="Okano H."/>
            <person name="Matsuno K."/>
        </authorList>
    </citation>
    <scope>NUCLEOTIDE SEQUENCE [MRNA]</scope>
    <scope>TISSUE SPECIFICITY</scope>
    <scope>DEVELOPMENTAL STAGE</scope>
    <scope>MULTIMERIZATION</scope>
</reference>
<reference key="2">
    <citation type="journal article" date="2004" name="Genome Res.">
        <title>The status, quality, and expansion of the NIH full-length cDNA project: the Mammalian Gene Collection (MGC).</title>
        <authorList>
            <consortium name="The MGC Project Team"/>
        </authorList>
    </citation>
    <scope>NUCLEOTIDE SEQUENCE [LARGE SCALE MRNA]</scope>
    <source>
        <tissue>Brain</tissue>
        <tissue>Olfactory epithelium</tissue>
    </source>
</reference>
<reference key="3">
    <citation type="journal article" date="2010" name="Cell">
        <title>A tissue-specific atlas of mouse protein phosphorylation and expression.</title>
        <authorList>
            <person name="Huttlin E.L."/>
            <person name="Jedrychowski M.P."/>
            <person name="Elias J.E."/>
            <person name="Goswami T."/>
            <person name="Rad R."/>
            <person name="Beausoleil S.A."/>
            <person name="Villen J."/>
            <person name="Haas W."/>
            <person name="Sowa M.E."/>
            <person name="Gygi S.P."/>
        </authorList>
    </citation>
    <scope>IDENTIFICATION BY MASS SPECTROMETRY [LARGE SCALE ANALYSIS]</scope>
    <source>
        <tissue>Brain</tissue>
        <tissue>Testis</tissue>
    </source>
</reference>
<gene>
    <name type="primary">Dtx3</name>
</gene>
<comment type="function">
    <text evidence="1">Regulator of Notch signaling, a signaling pathway involved in cell-cell communications that regulates a broad spectrum of cell-fate determinations. Probably acts both as a positive and negative regulator of Notch, depending on the developmental and cell context. Functions as a ubiquitin ligase protein in vitro, suggesting that it may regulate the Notch pathway via some ubiquitin ligase activity.</text>
</comment>
<comment type="catalytic activity">
    <reaction evidence="2">
        <text>S-ubiquitinyl-[E2 ubiquitin-conjugating enzyme]-L-cysteine + [acceptor protein]-L-lysine = [E2 ubiquitin-conjugating enzyme]-L-cysteine + N(6)-ubiquitinyl-[acceptor protein]-L-lysine.</text>
        <dbReference type="EC" id="2.3.2.27"/>
    </reaction>
</comment>
<comment type="pathway">
    <text>Protein modification; protein ubiquitination.</text>
</comment>
<comment type="subunit">
    <text>Homodimer. May form a heterodimer with other members of the Deltex family. Interacts with NOTCH1.</text>
</comment>
<comment type="subcellular location">
    <subcellularLocation>
        <location evidence="6">Cytoplasm</location>
    </subcellularLocation>
</comment>
<comment type="tissue specificity">
    <text evidence="5">Strongly expressed in testis and brain. Weakly expressed in kidney.</text>
</comment>
<comment type="developmental stage">
    <text evidence="5">In the CNS, it is expressed in the developing neural tube starting from 10.5 dpc in the spinal cord and around 11.5 dpc in the telencephalon. Expressed ubiquitously throughout the spinal cord and telencephalon during neurogenesis. Expressed throughout the developing retina at 15.5 dpc. Not expressed in the somite or presomite during somitogenesis. Expressed slightly later that Dtx2.</text>
</comment>
<comment type="similarity">
    <text evidence="6">Belongs to the Deltex family.</text>
</comment>
<keyword id="KW-0963">Cytoplasm</keyword>
<keyword id="KW-0479">Metal-binding</keyword>
<keyword id="KW-0914">Notch signaling pathway</keyword>
<keyword id="KW-1185">Reference proteome</keyword>
<keyword id="KW-0808">Transferase</keyword>
<keyword id="KW-0833">Ubl conjugation pathway</keyword>
<keyword id="KW-0862">Zinc</keyword>
<keyword id="KW-0863">Zinc-finger</keyword>
<sequence>MSFVLSRMAACGGSCKNKVTVSKPVWDFLSKETPARLARLREEHRVSILIDGETSDIYVLQLSPQGPPPAPPNGLYLARKALKGLLKEAEKELKKAQRQGELMGCLALGGGGEHPELHRPGPPPLRAAPLLPPGARGLPPPPPPLPPPLPPRLREDAEEQETTCPICLGEIQNAKTLEKCRHSFCEGCITRALQVKKACPMCGRFYGQLVGNQPQNGRMLVSKDATLLLPSYEKYGTIVIQYVFPPGVQGAEHPNPGVRYPGTTRVAYLPDCPEGNKVLTLFRKAFDQRLTFTIGTSMTTGRPNVITWNDIHHKTSCTGGPQLFGYPDPTYLTRVQEELRAKGITDD</sequence>
<protein>
    <recommendedName>
        <fullName>Probable E3 ubiquitin-protein ligase DTX3</fullName>
        <ecNumber evidence="2">2.3.2.27</ecNumber>
    </recommendedName>
    <alternativeName>
        <fullName>Protein deltex-3</fullName>
        <shortName>Deltex3</shortName>
        <shortName>mDTX3</shortName>
    </alternativeName>
    <alternativeName>
        <fullName evidence="6">RING-type E3 ubiquitin transferase DTX3</fullName>
    </alternativeName>
</protein>
<evidence type="ECO:0000250" key="1"/>
<evidence type="ECO:0000250" key="2">
    <source>
        <dbReference type="UniProtKB" id="Q61010"/>
    </source>
</evidence>
<evidence type="ECO:0000255" key="3">
    <source>
        <dbReference type="PROSITE-ProRule" id="PRU00175"/>
    </source>
</evidence>
<evidence type="ECO:0000256" key="4">
    <source>
        <dbReference type="SAM" id="MobiDB-lite"/>
    </source>
</evidence>
<evidence type="ECO:0000269" key="5">
    <source>
    </source>
</evidence>
<evidence type="ECO:0000305" key="6"/>
<proteinExistence type="evidence at protein level"/>
<accession>Q80V91</accession>
<accession>Q4FZD3</accession>
<accession>Q9ER06</accession>
<feature type="chain" id="PRO_0000219086" description="Probable E3 ubiquitin-protein ligase DTX3">
    <location>
        <begin position="1"/>
        <end position="347"/>
    </location>
</feature>
<feature type="zinc finger region" description="RING-type" evidence="3">
    <location>
        <begin position="164"/>
        <end position="205"/>
    </location>
</feature>
<feature type="region of interest" description="Disordered" evidence="4">
    <location>
        <begin position="111"/>
        <end position="157"/>
    </location>
</feature>
<feature type="compositionally biased region" description="Pro residues" evidence="4">
    <location>
        <begin position="120"/>
        <end position="151"/>
    </location>
</feature>
<name>DTX3_MOUSE</name>